<sequence>MTDSKYFTTNKKGEIFELKAELNNEKKEKRKEAVKKVIAAMTVGKDVSSLFPDVVNCMQTDNLELKKLVYLYLMNYAKSQPDMAIMAVNSFVKDCEDPNPLIRALAVRTMGCIRVDKITEYLCEPLRKCLKDEDPYVRKTAAVCVAKLHDINAQMVEDQGFLDSLRDLIADSNPMVVANAVAALSEISESHPNSNLLDLNPQNINKLLTALNECTEWGQIFILDCLSNYNPKDDREAQSICERVTPRLSHANSAVVLSAVKVLMKFLELLPKESDYYNMLLKKLAPPLVTLLSGEPEVQYVALRNINLIVQKRPEILKQEIKVFFVKYNDPIYVKLEKLDIMIRLASQANIAQVLAELKEYATEVDVDFVRKAVRAIGRCAIKVEQSAERCVSTLLDLIQTKVNYVVQEAIVVIRDIFRKYPNKYESIIATLCENLDSLDEPDARAAMIWIVGEYAERIDNADELLESFLEGFHDESTQVQLTLLTAIVKLFLKKPSETQELVQQVLSLATQDSDNPDLRDRGYIYWRLLSTDPVTAKEVVLSEKPLISEETDLIEPTLLDELICHIGSLASVYHKPPNAFVEGSHGIHRKHLPIHHGSTDAGDSPVGTTTATNLEQPQVIPSQGDLLGDLLNLDLGPPVNVPQVSSMQMGAVDLLGGGLDSLLGSDLGGGIGGSPAVGQSFIPSSVPATFAPSPTPAVVSSGLNDLFELSTGIGMAPGGYVAPKAVWLPAVKAKGLEISGTFTHRQGHIYMEMNFTNKALQHMTDFAIQFNKNSFGVIPSTPLAIHTPLMPNQSIDVSLPLNTLGPVMKMEPLNNLQVAVKNNIDVFYFSCLIPLNVLFVEDGKMERQVFLATWKDIPNENELQFQIKECHLNADTVSSKLQNNNVYTIAKRNVEGQDMLYQSLKLTNGIWILAELRIQPGNPNYTLSLKCRAPEVSQYIYQVYDSILKN</sequence>
<name>AP1B1_BOVIN</name>
<feature type="chain" id="PRO_0000283800" description="AP-1 complex subunit beta-1">
    <location>
        <begin position="1"/>
        <end position="951"/>
    </location>
</feature>
<feature type="modified residue" description="N6-acetyllysine" evidence="3">
    <location>
        <position position="318"/>
    </location>
</feature>
<feature type="modified residue" description="3'-nitrotyrosine" evidence="2">
    <location>
        <position position="574"/>
    </location>
</feature>
<accession>Q08DS7</accession>
<keyword id="KW-0007">Acetylation</keyword>
<keyword id="KW-0968">Cytoplasmic vesicle</keyword>
<keyword id="KW-0333">Golgi apparatus</keyword>
<keyword id="KW-0472">Membrane</keyword>
<keyword id="KW-0944">Nitration</keyword>
<keyword id="KW-0653">Protein transport</keyword>
<keyword id="KW-1185">Reference proteome</keyword>
<keyword id="KW-0813">Transport</keyword>
<comment type="function">
    <text evidence="1">Subunit of clathrin-associated adaptor protein complex 1 that plays a role in protein sorting in the late-Golgi/trans-Golgi network (TGN) and/or endosomes. The AP complexes mediate both the recruitment of clathrin to membranes and the recognition of sorting signals within the cytosolic tails of transmembrane cargo molecules (By similarity).</text>
</comment>
<comment type="subunit">
    <text evidence="1">Adaptor protein complex 1 (AP-1) is a heterotetramer composed of two large adaptins (gamma-type subunit AP1G1 and beta-type subunit AP1B1), a medium adaptin (mu-type subunit AP1M1 or AP1M2) and a small adaptin (sigma-type subunit AP1S1 or AP1S2 or AP1S3).</text>
</comment>
<comment type="subcellular location">
    <subcellularLocation>
        <location evidence="1">Cytoplasmic vesicle</location>
        <location evidence="1">Clathrin-coated vesicle membrane</location>
        <topology evidence="1">Peripheral membrane protein</topology>
        <orientation evidence="1">Cytoplasmic side</orientation>
    </subcellularLocation>
    <subcellularLocation>
        <location evidence="1">Golgi apparatus</location>
    </subcellularLocation>
    <text evidence="1">Component of the coat surrounding the cytoplasmic face of coated vesicles located at the Golgi complex.</text>
</comment>
<comment type="similarity">
    <text evidence="4">Belongs to the adaptor complexes large subunit family.</text>
</comment>
<protein>
    <recommendedName>
        <fullName>AP-1 complex subunit beta-1</fullName>
    </recommendedName>
    <alternativeName>
        <fullName>Adaptor protein complex AP-1 subunit beta-1</fullName>
    </alternativeName>
    <alternativeName>
        <fullName>Adaptor-related protein complex 1 subunit beta-1</fullName>
    </alternativeName>
    <alternativeName>
        <fullName>Beta-1-adaptin</fullName>
    </alternativeName>
    <alternativeName>
        <fullName>Beta-adaptin 1</fullName>
    </alternativeName>
    <alternativeName>
        <fullName>Clathrin assembly protein complex 1 beta large chain</fullName>
    </alternativeName>
    <alternativeName>
        <fullName>Golgi adaptor HA1/AP1 adaptin beta subunit</fullName>
    </alternativeName>
</protein>
<dbReference type="EMBL" id="BC123583">
    <property type="protein sequence ID" value="AAI23584.1"/>
    <property type="molecule type" value="mRNA"/>
</dbReference>
<dbReference type="RefSeq" id="NP_001068593.1">
    <property type="nucleotide sequence ID" value="NM_001075125.2"/>
</dbReference>
<dbReference type="RefSeq" id="XP_010814093.1">
    <property type="nucleotide sequence ID" value="XM_010815791.2"/>
</dbReference>
<dbReference type="RefSeq" id="XP_015323437.1">
    <property type="nucleotide sequence ID" value="XM_015467951.1"/>
</dbReference>
<dbReference type="RefSeq" id="XP_024835389.1">
    <property type="nucleotide sequence ID" value="XM_024979621.2"/>
</dbReference>
<dbReference type="RefSeq" id="XP_024835390.1">
    <property type="nucleotide sequence ID" value="XM_024979622.2"/>
</dbReference>
<dbReference type="RefSeq" id="XP_024835391.1">
    <property type="nucleotide sequence ID" value="XM_024979623.2"/>
</dbReference>
<dbReference type="RefSeq" id="XP_059733710.1">
    <property type="nucleotide sequence ID" value="XM_059877727.1"/>
</dbReference>
<dbReference type="SMR" id="Q08DS7"/>
<dbReference type="BioGRID" id="159457">
    <property type="interactions" value="2"/>
</dbReference>
<dbReference type="FunCoup" id="Q08DS7">
    <property type="interactions" value="4127"/>
</dbReference>
<dbReference type="STRING" id="9913.ENSBTAP00000060816"/>
<dbReference type="PaxDb" id="9913-ENSBTAP00000027078"/>
<dbReference type="Ensembl" id="ENSBTAT00000076585.2">
    <property type="protein sequence ID" value="ENSBTAP00000060816.1"/>
    <property type="gene ID" value="ENSBTAG00000020316.7"/>
</dbReference>
<dbReference type="GeneID" id="282183"/>
<dbReference type="KEGG" id="bta:282183"/>
<dbReference type="CTD" id="163"/>
<dbReference type="VEuPathDB" id="HostDB:ENSBTAG00000020316"/>
<dbReference type="VGNC" id="VGNC:55033">
    <property type="gene designation" value="AP2B1"/>
</dbReference>
<dbReference type="eggNOG" id="KOG1061">
    <property type="taxonomic scope" value="Eukaryota"/>
</dbReference>
<dbReference type="GeneTree" id="ENSGT00940000155206"/>
<dbReference type="InParanoid" id="Q08DS7"/>
<dbReference type="OMA" id="PECNEWG"/>
<dbReference type="OrthoDB" id="10254310at2759"/>
<dbReference type="Reactome" id="R-BTA-177504">
    <property type="pathway name" value="Retrograde neurotrophin signalling"/>
</dbReference>
<dbReference type="Reactome" id="R-BTA-2132295">
    <property type="pathway name" value="MHC class II antigen presentation"/>
</dbReference>
<dbReference type="Reactome" id="R-BTA-416993">
    <property type="pathway name" value="Trafficking of GluR2-containing AMPA receptors"/>
</dbReference>
<dbReference type="Reactome" id="R-BTA-437239">
    <property type="pathway name" value="Recycling pathway of L1"/>
</dbReference>
<dbReference type="Reactome" id="R-BTA-5099900">
    <property type="pathway name" value="WNT5A-dependent internalization of FZD4"/>
</dbReference>
<dbReference type="Reactome" id="R-BTA-5140745">
    <property type="pathway name" value="WNT5A-dependent internalization of FZD2, FZD5 and ROR2"/>
</dbReference>
<dbReference type="Reactome" id="R-BTA-8856825">
    <property type="pathway name" value="Cargo recognition for clathrin-mediated endocytosis"/>
</dbReference>
<dbReference type="Reactome" id="R-BTA-8856828">
    <property type="pathway name" value="Clathrin-mediated endocytosis"/>
</dbReference>
<dbReference type="Reactome" id="R-BTA-8866427">
    <property type="pathway name" value="VLDLR internalisation and degradation"/>
</dbReference>
<dbReference type="Reactome" id="R-BTA-8964038">
    <property type="pathway name" value="LDL clearance"/>
</dbReference>
<dbReference type="Proteomes" id="UP000009136">
    <property type="component" value="Chromosome 19"/>
</dbReference>
<dbReference type="Bgee" id="ENSBTAG00000020316">
    <property type="expression patterns" value="Expressed in spermatid and 105 other cell types or tissues"/>
</dbReference>
<dbReference type="GO" id="GO:0030122">
    <property type="term" value="C:AP-2 adaptor complex"/>
    <property type="evidence" value="ECO:0007669"/>
    <property type="project" value="Ensembl"/>
</dbReference>
<dbReference type="GO" id="GO:0098978">
    <property type="term" value="C:glutamatergic synapse"/>
    <property type="evidence" value="ECO:0007669"/>
    <property type="project" value="Ensembl"/>
</dbReference>
<dbReference type="GO" id="GO:0005794">
    <property type="term" value="C:Golgi apparatus"/>
    <property type="evidence" value="ECO:0007669"/>
    <property type="project" value="UniProtKB-SubCell"/>
</dbReference>
<dbReference type="GO" id="GO:0098794">
    <property type="term" value="C:postsynapse"/>
    <property type="evidence" value="ECO:0007669"/>
    <property type="project" value="GOC"/>
</dbReference>
<dbReference type="GO" id="GO:0098793">
    <property type="term" value="C:presynapse"/>
    <property type="evidence" value="ECO:0007669"/>
    <property type="project" value="GOC"/>
</dbReference>
<dbReference type="GO" id="GO:0030276">
    <property type="term" value="F:clathrin binding"/>
    <property type="evidence" value="ECO:0000318"/>
    <property type="project" value="GO_Central"/>
</dbReference>
<dbReference type="GO" id="GO:0035904">
    <property type="term" value="P:aorta development"/>
    <property type="evidence" value="ECO:0007669"/>
    <property type="project" value="Ensembl"/>
</dbReference>
<dbReference type="GO" id="GO:0072583">
    <property type="term" value="P:clathrin-dependent endocytosis"/>
    <property type="evidence" value="ECO:0007669"/>
    <property type="project" value="Ensembl"/>
</dbReference>
<dbReference type="GO" id="GO:0060976">
    <property type="term" value="P:coronary vasculature development"/>
    <property type="evidence" value="ECO:0007669"/>
    <property type="project" value="Ensembl"/>
</dbReference>
<dbReference type="GO" id="GO:0006886">
    <property type="term" value="P:intracellular protein transport"/>
    <property type="evidence" value="ECO:0007669"/>
    <property type="project" value="InterPro"/>
</dbReference>
<dbReference type="GO" id="GO:0001822">
    <property type="term" value="P:kidney development"/>
    <property type="evidence" value="ECO:0007669"/>
    <property type="project" value="Ensembl"/>
</dbReference>
<dbReference type="GO" id="GO:0098884">
    <property type="term" value="P:postsynaptic neurotransmitter receptor internalization"/>
    <property type="evidence" value="ECO:0007669"/>
    <property type="project" value="Ensembl"/>
</dbReference>
<dbReference type="GO" id="GO:0048488">
    <property type="term" value="P:synaptic vesicle endocytosis"/>
    <property type="evidence" value="ECO:0007669"/>
    <property type="project" value="Ensembl"/>
</dbReference>
<dbReference type="GO" id="GO:0003281">
    <property type="term" value="P:ventricular septum development"/>
    <property type="evidence" value="ECO:0007669"/>
    <property type="project" value="Ensembl"/>
</dbReference>
<dbReference type="FunFam" id="1.25.10.10:FF:000002">
    <property type="entry name" value="AP complex subunit beta"/>
    <property type="match status" value="1"/>
</dbReference>
<dbReference type="FunFam" id="2.60.40.1150:FF:000001">
    <property type="entry name" value="AP complex subunit beta"/>
    <property type="match status" value="1"/>
</dbReference>
<dbReference type="FunFam" id="3.30.310.10:FF:000003">
    <property type="entry name" value="AP complex subunit beta"/>
    <property type="match status" value="1"/>
</dbReference>
<dbReference type="Gene3D" id="2.60.40.1150">
    <property type="match status" value="1"/>
</dbReference>
<dbReference type="Gene3D" id="1.25.10.10">
    <property type="entry name" value="Leucine-rich Repeat Variant"/>
    <property type="match status" value="1"/>
</dbReference>
<dbReference type="Gene3D" id="3.30.310.10">
    <property type="entry name" value="TATA-Binding Protein"/>
    <property type="match status" value="1"/>
</dbReference>
<dbReference type="InterPro" id="IPR026739">
    <property type="entry name" value="AP_beta"/>
</dbReference>
<dbReference type="InterPro" id="IPR016342">
    <property type="entry name" value="AP_complex_bsu_1_2_4"/>
</dbReference>
<dbReference type="InterPro" id="IPR011989">
    <property type="entry name" value="ARM-like"/>
</dbReference>
<dbReference type="InterPro" id="IPR016024">
    <property type="entry name" value="ARM-type_fold"/>
</dbReference>
<dbReference type="InterPro" id="IPR000225">
    <property type="entry name" value="Armadillo"/>
</dbReference>
<dbReference type="InterPro" id="IPR015151">
    <property type="entry name" value="B-adaptin_app_sub_C"/>
</dbReference>
<dbReference type="InterPro" id="IPR002553">
    <property type="entry name" value="Clathrin/coatomer_adapt-like_N"/>
</dbReference>
<dbReference type="InterPro" id="IPR008152">
    <property type="entry name" value="Clathrin_a/b/g-adaptin_app_Ig"/>
</dbReference>
<dbReference type="InterPro" id="IPR013041">
    <property type="entry name" value="Clathrin_app_Ig-like_sf"/>
</dbReference>
<dbReference type="InterPro" id="IPR013037">
    <property type="entry name" value="Clathrin_b-adaptin_app_Ig-like"/>
</dbReference>
<dbReference type="InterPro" id="IPR009028">
    <property type="entry name" value="Coatomer/calthrin_app_sub_C"/>
</dbReference>
<dbReference type="InterPro" id="IPR012295">
    <property type="entry name" value="TBP_dom_sf"/>
</dbReference>
<dbReference type="PANTHER" id="PTHR11134">
    <property type="entry name" value="ADAPTOR COMPLEX SUBUNIT BETA FAMILY MEMBER"/>
    <property type="match status" value="1"/>
</dbReference>
<dbReference type="Pfam" id="PF01602">
    <property type="entry name" value="Adaptin_N"/>
    <property type="match status" value="1"/>
</dbReference>
<dbReference type="Pfam" id="PF02883">
    <property type="entry name" value="Alpha_adaptinC2"/>
    <property type="match status" value="1"/>
</dbReference>
<dbReference type="Pfam" id="PF09066">
    <property type="entry name" value="B2-adapt-app_C"/>
    <property type="match status" value="1"/>
</dbReference>
<dbReference type="PIRSF" id="PIRSF002291">
    <property type="entry name" value="AP_complex_beta"/>
    <property type="match status" value="1"/>
</dbReference>
<dbReference type="SMART" id="SM00809">
    <property type="entry name" value="Alpha_adaptinC2"/>
    <property type="match status" value="1"/>
</dbReference>
<dbReference type="SMART" id="SM00185">
    <property type="entry name" value="ARM"/>
    <property type="match status" value="2"/>
</dbReference>
<dbReference type="SMART" id="SM01020">
    <property type="entry name" value="B2-adapt-app_C"/>
    <property type="match status" value="1"/>
</dbReference>
<dbReference type="SUPFAM" id="SSF48371">
    <property type="entry name" value="ARM repeat"/>
    <property type="match status" value="1"/>
</dbReference>
<dbReference type="SUPFAM" id="SSF49348">
    <property type="entry name" value="Clathrin adaptor appendage domain"/>
    <property type="match status" value="1"/>
</dbReference>
<dbReference type="SUPFAM" id="SSF55711">
    <property type="entry name" value="Subdomain of clathrin and coatomer appendage domain"/>
    <property type="match status" value="1"/>
</dbReference>
<reference key="1">
    <citation type="submission" date="2006-09" db="EMBL/GenBank/DDBJ databases">
        <authorList>
            <consortium name="NIH - Mammalian Gene Collection (MGC) project"/>
        </authorList>
    </citation>
    <scope>NUCLEOTIDE SEQUENCE [LARGE SCALE MRNA]</scope>
    <source>
        <strain>Hereford</strain>
        <tissue>Thymus</tissue>
    </source>
</reference>
<gene>
    <name type="primary">AP2B1</name>
</gene>
<proteinExistence type="evidence at transcript level"/>
<organism>
    <name type="scientific">Bos taurus</name>
    <name type="common">Bovine</name>
    <dbReference type="NCBI Taxonomy" id="9913"/>
    <lineage>
        <taxon>Eukaryota</taxon>
        <taxon>Metazoa</taxon>
        <taxon>Chordata</taxon>
        <taxon>Craniata</taxon>
        <taxon>Vertebrata</taxon>
        <taxon>Euteleostomi</taxon>
        <taxon>Mammalia</taxon>
        <taxon>Eutheria</taxon>
        <taxon>Laurasiatheria</taxon>
        <taxon>Artiodactyla</taxon>
        <taxon>Ruminantia</taxon>
        <taxon>Pecora</taxon>
        <taxon>Bovidae</taxon>
        <taxon>Bovinae</taxon>
        <taxon>Bos</taxon>
    </lineage>
</organism>
<evidence type="ECO:0000250" key="1"/>
<evidence type="ECO:0000250" key="2">
    <source>
        <dbReference type="UniProtKB" id="O35643"/>
    </source>
</evidence>
<evidence type="ECO:0000250" key="3">
    <source>
        <dbReference type="UniProtKB" id="Q10567"/>
    </source>
</evidence>
<evidence type="ECO:0000305" key="4"/>